<dbReference type="EMBL" id="CP000527">
    <property type="protein sequence ID" value="ABM29083.1"/>
    <property type="status" value="ALT_INIT"/>
    <property type="molecule type" value="Genomic_DNA"/>
</dbReference>
<dbReference type="SMR" id="A1VF67"/>
<dbReference type="KEGG" id="dvl:Dvul_2067"/>
<dbReference type="HOGENOM" id="CLU_148047_0_0_7"/>
<dbReference type="Proteomes" id="UP000009173">
    <property type="component" value="Chromosome"/>
</dbReference>
<dbReference type="GO" id="GO:0005886">
    <property type="term" value="C:plasma membrane"/>
    <property type="evidence" value="ECO:0007669"/>
    <property type="project" value="UniProtKB-SubCell"/>
</dbReference>
<dbReference type="GO" id="GO:0045259">
    <property type="term" value="C:proton-transporting ATP synthase complex"/>
    <property type="evidence" value="ECO:0007669"/>
    <property type="project" value="UniProtKB-KW"/>
</dbReference>
<dbReference type="GO" id="GO:0033177">
    <property type="term" value="C:proton-transporting two-sector ATPase complex, proton-transporting domain"/>
    <property type="evidence" value="ECO:0007669"/>
    <property type="project" value="InterPro"/>
</dbReference>
<dbReference type="GO" id="GO:0008289">
    <property type="term" value="F:lipid binding"/>
    <property type="evidence" value="ECO:0007669"/>
    <property type="project" value="UniProtKB-KW"/>
</dbReference>
<dbReference type="GO" id="GO:0046933">
    <property type="term" value="F:proton-transporting ATP synthase activity, rotational mechanism"/>
    <property type="evidence" value="ECO:0007669"/>
    <property type="project" value="UniProtKB-UniRule"/>
</dbReference>
<dbReference type="CDD" id="cd18121">
    <property type="entry name" value="ATP-synt_Fo_c"/>
    <property type="match status" value="1"/>
</dbReference>
<dbReference type="Gene3D" id="1.20.120.610">
    <property type="entry name" value="lithium bound rotor ring of v- atpase"/>
    <property type="match status" value="1"/>
</dbReference>
<dbReference type="HAMAP" id="MF_01396">
    <property type="entry name" value="ATP_synth_c_bact"/>
    <property type="match status" value="1"/>
</dbReference>
<dbReference type="InterPro" id="IPR005953">
    <property type="entry name" value="ATP_synth_csu_bac/chlpt"/>
</dbReference>
<dbReference type="InterPro" id="IPR000454">
    <property type="entry name" value="ATP_synth_F0_csu"/>
</dbReference>
<dbReference type="InterPro" id="IPR020537">
    <property type="entry name" value="ATP_synth_F0_csu_DDCD_BS"/>
</dbReference>
<dbReference type="InterPro" id="IPR002379">
    <property type="entry name" value="ATPase_proteolipid_c-like_dom"/>
</dbReference>
<dbReference type="InterPro" id="IPR035921">
    <property type="entry name" value="F/V-ATP_Csub_sf"/>
</dbReference>
<dbReference type="NCBIfam" id="TIGR01260">
    <property type="entry name" value="ATP_synt_c"/>
    <property type="match status" value="1"/>
</dbReference>
<dbReference type="PANTHER" id="PTHR10031">
    <property type="entry name" value="ATP SYNTHASE LIPID-BINDING PROTEIN, MITOCHONDRIAL"/>
    <property type="match status" value="1"/>
</dbReference>
<dbReference type="PANTHER" id="PTHR10031:SF0">
    <property type="entry name" value="ATPASE PROTEIN 9"/>
    <property type="match status" value="1"/>
</dbReference>
<dbReference type="Pfam" id="PF00137">
    <property type="entry name" value="ATP-synt_C"/>
    <property type="match status" value="1"/>
</dbReference>
<dbReference type="PRINTS" id="PR00124">
    <property type="entry name" value="ATPASEC"/>
</dbReference>
<dbReference type="SUPFAM" id="SSF81333">
    <property type="entry name" value="F1F0 ATP synthase subunit C"/>
    <property type="match status" value="1"/>
</dbReference>
<dbReference type="PROSITE" id="PS00605">
    <property type="entry name" value="ATPASE_C"/>
    <property type="match status" value="1"/>
</dbReference>
<reference key="1">
    <citation type="journal article" date="2009" name="Environ. Microbiol.">
        <title>Contribution of mobile genetic elements to Desulfovibrio vulgaris genome plasticity.</title>
        <authorList>
            <person name="Walker C.B."/>
            <person name="Stolyar S."/>
            <person name="Chivian D."/>
            <person name="Pinel N."/>
            <person name="Gabster J.A."/>
            <person name="Dehal P.S."/>
            <person name="He Z."/>
            <person name="Yang Z.K."/>
            <person name="Yen H.C."/>
            <person name="Zhou J."/>
            <person name="Wall J.D."/>
            <person name="Hazen T.C."/>
            <person name="Arkin A.P."/>
            <person name="Stahl D.A."/>
        </authorList>
    </citation>
    <scope>NUCLEOTIDE SEQUENCE [LARGE SCALE GENOMIC DNA]</scope>
    <source>
        <strain>DP4</strain>
    </source>
</reference>
<name>ATPL_NITV4</name>
<proteinExistence type="inferred from homology"/>
<accession>A1VF67</accession>
<organism>
    <name type="scientific">Nitratidesulfovibrio vulgaris (strain DP4)</name>
    <name type="common">Desulfovibrio vulgaris</name>
    <dbReference type="NCBI Taxonomy" id="391774"/>
    <lineage>
        <taxon>Bacteria</taxon>
        <taxon>Pseudomonadati</taxon>
        <taxon>Thermodesulfobacteriota</taxon>
        <taxon>Desulfovibrionia</taxon>
        <taxon>Desulfovibrionales</taxon>
        <taxon>Desulfovibrionaceae</taxon>
        <taxon>Nitratidesulfovibrio</taxon>
    </lineage>
</organism>
<feature type="chain" id="PRO_5000210488" description="ATP synthase subunit c">
    <location>
        <begin position="1"/>
        <end position="82"/>
    </location>
</feature>
<feature type="transmembrane region" description="Helical" evidence="1">
    <location>
        <begin position="6"/>
        <end position="26"/>
    </location>
</feature>
<feature type="transmembrane region" description="Helical" evidence="1">
    <location>
        <begin position="49"/>
        <end position="69"/>
    </location>
</feature>
<feature type="site" description="Reversibly protonated during proton transport" evidence="1">
    <location>
        <position position="61"/>
    </location>
</feature>
<comment type="function">
    <text evidence="1">F(1)F(0) ATP synthase produces ATP from ADP in the presence of a proton or sodium gradient. F-type ATPases consist of two structural domains, F(1) containing the extramembraneous catalytic core and F(0) containing the membrane proton channel, linked together by a central stalk and a peripheral stalk. During catalysis, ATP synthesis in the catalytic domain of F(1) is coupled via a rotary mechanism of the central stalk subunits to proton translocation.</text>
</comment>
<comment type="function">
    <text evidence="1">Key component of the F(0) channel; it plays a direct role in translocation across the membrane. A homomeric c-ring of between 10-14 subunits forms the central stalk rotor element with the F(1) delta and epsilon subunits.</text>
</comment>
<comment type="subunit">
    <text evidence="1">F-type ATPases have 2 components, F(1) - the catalytic core - and F(0) - the membrane proton channel. F(1) has five subunits: alpha(3), beta(3), gamma(1), delta(1), epsilon(1). F(0) has three main subunits: a(1), b(2) and c(10-14). The alpha and beta chains form an alternating ring which encloses part of the gamma chain. F(1) is attached to F(0) by a central stalk formed by the gamma and epsilon chains, while a peripheral stalk is formed by the delta and b chains.</text>
</comment>
<comment type="subcellular location">
    <subcellularLocation>
        <location evidence="1">Cell inner membrane</location>
        <topology evidence="1">Multi-pass membrane protein</topology>
    </subcellularLocation>
</comment>
<comment type="similarity">
    <text evidence="1">Belongs to the ATPase C chain family.</text>
</comment>
<comment type="sequence caution" evidence="2">
    <conflict type="erroneous initiation">
        <sequence resource="EMBL-CDS" id="ABM29083"/>
    </conflict>
</comment>
<gene>
    <name evidence="1" type="primary">atpE</name>
    <name type="ordered locus">Dvul_2067</name>
</gene>
<evidence type="ECO:0000255" key="1">
    <source>
        <dbReference type="HAMAP-Rule" id="MF_01396"/>
    </source>
</evidence>
<evidence type="ECO:0000305" key="2"/>
<protein>
    <recommendedName>
        <fullName evidence="1">ATP synthase subunit c</fullName>
    </recommendedName>
    <alternativeName>
        <fullName evidence="1">ATP synthase F(0) sector subunit c</fullName>
    </alternativeName>
    <alternativeName>
        <fullName evidence="1">F-type ATPase subunit c</fullName>
        <shortName evidence="1">F-ATPase subunit c</shortName>
    </alternativeName>
    <alternativeName>
        <fullName evidence="1">Lipid-binding protein</fullName>
    </alternativeName>
</protein>
<keyword id="KW-0066">ATP synthesis</keyword>
<keyword id="KW-0997">Cell inner membrane</keyword>
<keyword id="KW-1003">Cell membrane</keyword>
<keyword id="KW-0138">CF(0)</keyword>
<keyword id="KW-0375">Hydrogen ion transport</keyword>
<keyword id="KW-0406">Ion transport</keyword>
<keyword id="KW-0446">Lipid-binding</keyword>
<keyword id="KW-0472">Membrane</keyword>
<keyword id="KW-0812">Transmembrane</keyword>
<keyword id="KW-1133">Transmembrane helix</keyword>
<keyword id="KW-0813">Transport</keyword>
<sequence>MDSSALGLTCLAAAIGMAIAAAGCGIGQGMGLKAACEGTARNPEAGGKIMVTLILGLAFVESLAIYALVVNLILLFANPFMG</sequence>